<protein>
    <recommendedName>
        <fullName evidence="4">Collagen alpha-2(I) chain</fullName>
    </recommendedName>
    <alternativeName>
        <fullName evidence="1">Alpha-2 type I collagen</fullName>
    </alternativeName>
</protein>
<comment type="function">
    <text evidence="5">Type I collagen is a member of group I collagen (fibrillar forming collagen).</text>
</comment>
<comment type="subunit">
    <text evidence="1">Trimers of one alpha 2(I) and two alpha 1(I) chains. Interacts (via C-terminus) with TMEM131 (via PapD-L domain); the interaction is direct and is involved in assembly and TRAPPIII ER-to-Golgi transport complex-dependent secretion of collagen.</text>
</comment>
<comment type="subcellular location">
    <subcellularLocation>
        <location>Secreted</location>
    </subcellularLocation>
    <subcellularLocation>
        <location>Secreted</location>
        <location>Extracellular space</location>
    </subcellularLocation>
    <subcellularLocation>
        <location evidence="5">Secreted</location>
        <location evidence="5">Extracellular space</location>
        <location evidence="5">Extracellular matrix</location>
    </subcellularLocation>
</comment>
<comment type="tissue specificity">
    <text evidence="3">Expressed in bones.</text>
</comment>
<comment type="PTM">
    <text evidence="1">Prolines at the third position of the tripeptide repeating unit (G-X-Y) are hydroxylated in some or all of the chains.</text>
</comment>
<comment type="miscellaneous">
    <text evidence="3">These protein fragments were extracted from ancient femur bone collected at Rampart Cave in Arizona, USA and around 28580 years old.</text>
</comment>
<comment type="similarity">
    <text evidence="5">Belongs to the fibrillar collagen family.</text>
</comment>
<organism evidence="4">
    <name type="scientific">Nothrotheriops shastensis</name>
    <name type="common">Shasta ground sloth</name>
    <dbReference type="NCBI Taxonomy" id="136416"/>
    <lineage>
        <taxon>Eukaryota</taxon>
        <taxon>Metazoa</taxon>
        <taxon>Chordata</taxon>
        <taxon>Craniata</taxon>
        <taxon>Vertebrata</taxon>
        <taxon>Euteleostomi</taxon>
        <taxon>Mammalia</taxon>
        <taxon>Eutheria</taxon>
        <taxon>Xenarthra</taxon>
        <taxon>Pilosa</taxon>
        <taxon>Folivora</taxon>
        <taxon>Megatheriidae</taxon>
        <taxon>Nothrotheriops</taxon>
    </lineage>
</organism>
<evidence type="ECO:0000250" key="1">
    <source>
        <dbReference type="UniProtKB" id="P08123"/>
    </source>
</evidence>
<evidence type="ECO:0000256" key="2">
    <source>
        <dbReference type="SAM" id="MobiDB-lite"/>
    </source>
</evidence>
<evidence type="ECO:0000269" key="3">
    <source>
    </source>
</evidence>
<evidence type="ECO:0000303" key="4">
    <source>
    </source>
</evidence>
<evidence type="ECO:0000305" key="5"/>
<sequence length="1008" mass="90993">GGFDFSFLPQPPQEKGHDGGRYYRAKQGVGLGPGPMGLMGPRGPPGASGAPGPQGFPAGEPGEPGQTGPAGARGPAGPPGKADGHPGKPGRPGERGVVGPQGARGFPGTPGLPGFKGIRGHNGLDGLKGQPGAPGVKGEPGAPGENGTPGQTGARGLPGERGRVGAPGPAGARGSDGSVGPVGPAGPIGSAGPPGFPGAPGPKGELGPVGNTGPSGPAGPRGEQGLPGVSGPVGPPGNPGANGLTGAKGAAGLPGVAGAPGLPGPRGIPGPVGASGATGARGLVGEPGPAGSKGESGNKGEPGSAGPQGPPGSSGEEGKRGPNGESGSTGPTGPPGLRGGPGSRGLPGADGRAGVIGPAGARGASGPAGVRGPSGDTGRPGEPGLMGARGLPGSPGNVGPAGKEGPAGLPGIDGRPGPIGPAGARGEAGNIGFPGPKGPAGDPGKGEKGHAGLAGNRGQGGKGEQGPAGPPGFQGLPGPAGTTGEAGKPGERGIPGEFGLPGPAGPRGERGPPGESGAVGPSGAIGSRGPSGPPGPDGNKGEPGVVGAPGTAGPAGSGGLPGERGAAGMPGGKGEKGELGLRGEVGTTGRDGARGAPGAVGAPGPAGATGDRGEAGAAGPAGPAGPRGSPGERGEVGPAGPNGFAGPAGAAGQPGAKGERGTKGPKGENGIVGPTGPVGSAGPAGPNGPAGPAGSRGDGGPPGATGFPGAAGRTGPPGPSGITGPPGPPGAAGKEGLRGPRGDQGPVGRTGETGAGGPPGFTGEKGPSGEPGTAGPPGTAGPQGLLGAPGILGLPGSRGERGLPGVAGAVGEPGPLGIGPPGARGPPGAVGSPGVNGAPGNPGSDGPPGRDGLPGHKGERGYAGNAGPVGAAGAPGPHGTVGPAGKHGNRGEPGPVGSVGPVGALGPRGPSGPQGIRGDKGEPGDKGPRGLPGLKGHNGLQGLPGLAGQHGDQGPGPVGPAGPRGPAGPSGPAGKDGRTGHPGAVGPAGIRGSGGGYDFGYEGDFYRA</sequence>
<keyword id="KW-0903">Direct protein sequencing</keyword>
<keyword id="KW-0952">Extinct organism protein</keyword>
<keyword id="KW-0272">Extracellular matrix</keyword>
<keyword id="KW-0325">Glycoprotein</keyword>
<keyword id="KW-0379">Hydroxylation</keyword>
<keyword id="KW-0964">Secreted</keyword>
<proteinExistence type="evidence at protein level"/>
<dbReference type="GO" id="GO:0005576">
    <property type="term" value="C:extracellular region"/>
    <property type="evidence" value="ECO:0007669"/>
    <property type="project" value="UniProtKB-SubCell"/>
</dbReference>
<dbReference type="InterPro" id="IPR008160">
    <property type="entry name" value="Collagen"/>
</dbReference>
<dbReference type="InterPro" id="IPR050938">
    <property type="entry name" value="Collagen_Structural_Proteins"/>
</dbReference>
<dbReference type="PANTHER" id="PTHR37456:SF6">
    <property type="entry name" value="COLLAGEN ALPHA-1(XXIII) CHAIN-LIKE ISOFORM X2"/>
    <property type="match status" value="1"/>
</dbReference>
<dbReference type="PANTHER" id="PTHR37456">
    <property type="entry name" value="SI:CH211-266K2.1"/>
    <property type="match status" value="1"/>
</dbReference>
<dbReference type="Pfam" id="PF01391">
    <property type="entry name" value="Collagen"/>
    <property type="match status" value="6"/>
</dbReference>
<name>CO1A2_NOTSH</name>
<feature type="chain" id="PRO_0000448471" description="Collagen alpha-2(I) chain">
    <location>
        <begin position="1"/>
        <end position="1008"/>
    </location>
</feature>
<feature type="region of interest" description="Disordered" evidence="2">
    <location>
        <begin position="1"/>
        <end position="999"/>
    </location>
</feature>
<feature type="compositionally biased region" description="Low complexity" evidence="2">
    <location>
        <begin position="38"/>
        <end position="81"/>
    </location>
</feature>
<feature type="compositionally biased region" description="Basic and acidic residues" evidence="2">
    <location>
        <begin position="82"/>
        <end position="94"/>
    </location>
</feature>
<feature type="compositionally biased region" description="Low complexity" evidence="2">
    <location>
        <begin position="164"/>
        <end position="193"/>
    </location>
</feature>
<feature type="compositionally biased region" description="Low complexity" evidence="2">
    <location>
        <begin position="239"/>
        <end position="260"/>
    </location>
</feature>
<feature type="compositionally biased region" description="Low complexity" evidence="2">
    <location>
        <begin position="301"/>
        <end position="314"/>
    </location>
</feature>
<feature type="compositionally biased region" description="Gly residues" evidence="2">
    <location>
        <begin position="336"/>
        <end position="345"/>
    </location>
</feature>
<feature type="compositionally biased region" description="Low complexity" evidence="2">
    <location>
        <begin position="358"/>
        <end position="374"/>
    </location>
</feature>
<feature type="compositionally biased region" description="Low complexity" evidence="2">
    <location>
        <begin position="409"/>
        <end position="428"/>
    </location>
</feature>
<feature type="compositionally biased region" description="Gly residues" evidence="2">
    <location>
        <begin position="455"/>
        <end position="466"/>
    </location>
</feature>
<feature type="compositionally biased region" description="Low complexity" evidence="2">
    <location>
        <begin position="513"/>
        <end position="530"/>
    </location>
</feature>
<feature type="compositionally biased region" description="Low complexity" evidence="2">
    <location>
        <begin position="542"/>
        <end position="552"/>
    </location>
</feature>
<feature type="compositionally biased region" description="Gly residues" evidence="2">
    <location>
        <begin position="553"/>
        <end position="562"/>
    </location>
</feature>
<feature type="compositionally biased region" description="Low complexity" evidence="2">
    <location>
        <begin position="582"/>
        <end position="629"/>
    </location>
</feature>
<feature type="compositionally biased region" description="Low complexity" evidence="2">
    <location>
        <begin position="636"/>
        <end position="656"/>
    </location>
</feature>
<feature type="compositionally biased region" description="Basic and acidic residues" evidence="2">
    <location>
        <begin position="657"/>
        <end position="666"/>
    </location>
</feature>
<feature type="compositionally biased region" description="Low complexity" evidence="2">
    <location>
        <begin position="674"/>
        <end position="684"/>
    </location>
</feature>
<feature type="compositionally biased region" description="Gly residues" evidence="2">
    <location>
        <begin position="694"/>
        <end position="703"/>
    </location>
</feature>
<feature type="compositionally biased region" description="Low complexity" evidence="2">
    <location>
        <begin position="704"/>
        <end position="714"/>
    </location>
</feature>
<feature type="compositionally biased region" description="Gly residues" evidence="2">
    <location>
        <begin position="751"/>
        <end position="760"/>
    </location>
</feature>
<feature type="compositionally biased region" description="Low complexity" evidence="2">
    <location>
        <begin position="768"/>
        <end position="795"/>
    </location>
</feature>
<feature type="compositionally biased region" description="Low complexity" evidence="2">
    <location>
        <begin position="803"/>
        <end position="813"/>
    </location>
</feature>
<feature type="compositionally biased region" description="Low complexity" evidence="2">
    <location>
        <begin position="826"/>
        <end position="842"/>
    </location>
</feature>
<feature type="compositionally biased region" description="Low complexity" evidence="2">
    <location>
        <begin position="862"/>
        <end position="884"/>
    </location>
</feature>
<feature type="compositionally biased region" description="Low complexity" evidence="2">
    <location>
        <begin position="892"/>
        <end position="907"/>
    </location>
</feature>
<feature type="compositionally biased region" description="Basic and acidic residues" evidence="2">
    <location>
        <begin position="917"/>
        <end position="928"/>
    </location>
</feature>
<feature type="compositionally biased region" description="Gly residues" evidence="2">
    <location>
        <begin position="989"/>
        <end position="998"/>
    </location>
</feature>
<feature type="modified residue" description="4-hydroxyproline" evidence="1">
    <location>
        <position position="9"/>
    </location>
</feature>
<feature type="modified residue" description="4-hydroxyproline" evidence="1">
    <location>
        <position position="12"/>
    </location>
</feature>
<feature type="modified residue" description="4-hydroxyproline" evidence="1">
    <location>
        <position position="45"/>
    </location>
</feature>
<feature type="modified residue" description="4-hydroxyproline" evidence="1">
    <location>
        <position position="51"/>
    </location>
</feature>
<feature type="modified residue" description="5-hydroxylysine; alternate" evidence="1">
    <location>
        <position position="116"/>
    </location>
</feature>
<feature type="modified residue" description="4-hydroxyproline" evidence="1">
    <location>
        <position position="380"/>
    </location>
</feature>
<feature type="modified residue" description="4-hydroxyproline" evidence="1">
    <location>
        <position position="383"/>
    </location>
</feature>
<feature type="glycosylation site" description="O-linked (Gal...) hydroxylysine; alternate" evidence="1">
    <location>
        <position position="116"/>
    </location>
</feature>
<feature type="unsure residue" description="L or I" evidence="4">
    <location>
        <position position="8"/>
    </location>
</feature>
<feature type="unsure residue" description="L or I" evidence="4">
    <location>
        <position position="31"/>
    </location>
</feature>
<feature type="unsure residue" description="L or I" evidence="4">
    <location>
        <position position="38"/>
    </location>
</feature>
<feature type="unsure residue" description="L or I" evidence="4">
    <location>
        <position position="112"/>
    </location>
</feature>
<feature type="unsure residue" description="L or I" evidence="4">
    <location>
        <position position="124"/>
    </location>
</feature>
<feature type="unsure residue" description="L or I" evidence="4">
    <location>
        <position position="127"/>
    </location>
</feature>
<feature type="unsure residue" description="L or I" evidence="4">
    <location>
        <position position="157"/>
    </location>
</feature>
<feature type="unsure residue" description="L or I" evidence="4">
    <location>
        <position position="206"/>
    </location>
</feature>
<feature type="unsure residue" description="L or I" evidence="4">
    <location>
        <position position="226"/>
    </location>
</feature>
<feature type="unsure residue" description="L or I" evidence="4">
    <location>
        <position position="244"/>
    </location>
</feature>
<feature type="unsure residue" description="L or I" evidence="4">
    <location>
        <position position="253"/>
    </location>
</feature>
<feature type="unsure residue" description="L or I" evidence="4">
    <location>
        <position position="262"/>
    </location>
</feature>
<feature type="unsure residue" description="L or I" evidence="4">
    <location>
        <position position="283"/>
    </location>
</feature>
<feature type="unsure residue" description="L or I" evidence="4">
    <location>
        <position position="337"/>
    </location>
</feature>
<feature type="unsure residue" description="L or I" evidence="4">
    <location>
        <position position="346"/>
    </location>
</feature>
<feature type="unsure residue" description="L or I" evidence="4">
    <location>
        <position position="385"/>
    </location>
</feature>
<feature type="unsure residue" description="L or I" evidence="4">
    <location>
        <position position="391"/>
    </location>
</feature>
<feature type="unsure residue" description="L or I" evidence="4">
    <location>
        <position position="409"/>
    </location>
</feature>
<feature type="unsure residue" description="L or I" evidence="4">
    <location>
        <position position="453"/>
    </location>
</feature>
<feature type="unsure residue" description="L or I" evidence="4">
    <location>
        <position position="476"/>
    </location>
</feature>
<feature type="unsure residue" description="L or I" evidence="4">
    <location>
        <position position="500"/>
    </location>
</feature>
<feature type="unsure residue" description="L or I" evidence="4">
    <location>
        <position position="560"/>
    </location>
</feature>
<feature type="unsure residue" description="L or I" evidence="4">
    <location>
        <position position="579"/>
    </location>
</feature>
<feature type="unsure residue" description="L or I" evidence="4">
    <location>
        <position position="581"/>
    </location>
</feature>
<feature type="unsure residue" description="L or I" evidence="4">
    <location>
        <position position="737"/>
    </location>
</feature>
<feature type="unsure residue" description="L or I" evidence="4">
    <location>
        <position position="785"/>
    </location>
</feature>
<feature type="unsure residue" description="L or I" evidence="4">
    <location>
        <position position="786"/>
    </location>
</feature>
<feature type="unsure residue" description="L or I" evidence="4">
    <location>
        <position position="792"/>
    </location>
</feature>
<feature type="unsure residue" description="L or I" evidence="4">
    <location>
        <position position="794"/>
    </location>
</feature>
<feature type="unsure residue" description="L or I" evidence="4">
    <location>
        <position position="803"/>
    </location>
</feature>
<feature type="unsure residue" description="L or I" evidence="4">
    <location>
        <position position="816"/>
    </location>
</feature>
<feature type="unsure residue" description="L or I" evidence="4">
    <location>
        <position position="853"/>
    </location>
</feature>
<feature type="unsure residue" description="L or I" evidence="4">
    <location>
        <position position="905"/>
    </location>
</feature>
<feature type="unsure residue" description="L or I" evidence="4">
    <location>
        <position position="931"/>
    </location>
</feature>
<feature type="unsure residue" description="L or I" evidence="4">
    <location>
        <position position="934"/>
    </location>
</feature>
<feature type="unsure residue" description="L or I" evidence="4">
    <location>
        <position position="940"/>
    </location>
</feature>
<feature type="unsure residue" description="L or I" evidence="4">
    <location>
        <position position="943"/>
    </location>
</feature>
<feature type="unsure residue" description="L or I" evidence="4">
    <location>
        <position position="946"/>
    </location>
</feature>
<feature type="non-consecutive residues" evidence="4">
    <location>
        <begin position="27"/>
        <end position="28"/>
    </location>
</feature>
<feature type="non-consecutive residues" evidence="4">
    <location>
        <begin position="56"/>
        <end position="57"/>
    </location>
</feature>
<feature type="non-consecutive residues" evidence="4">
    <location>
        <begin position="82"/>
        <end position="83"/>
    </location>
</feature>
<feature type="non-consecutive residues" evidence="4">
    <location>
        <begin position="445"/>
        <end position="446"/>
    </location>
</feature>
<feature type="non-consecutive residues" evidence="4">
    <location>
        <begin position="458"/>
        <end position="459"/>
    </location>
</feature>
<feature type="non-consecutive residues" evidence="4">
    <location>
        <begin position="818"/>
        <end position="819"/>
    </location>
</feature>
<feature type="non-consecutive residues" evidence="4">
    <location>
        <begin position="839"/>
        <end position="840"/>
    </location>
</feature>
<feature type="non-consecutive residues" evidence="4">
    <location>
        <begin position="954"/>
        <end position="955"/>
    </location>
</feature>
<feature type="non-consecutive residues" evidence="4">
    <location>
        <begin position="992"/>
        <end position="993"/>
    </location>
</feature>
<feature type="non-terminal residue" evidence="4">
    <location>
        <position position="1"/>
    </location>
</feature>
<feature type="non-terminal residue" evidence="4">
    <location>
        <position position="1008"/>
    </location>
</feature>
<accession>C0HLJ4</accession>
<reference evidence="5" key="1">
    <citation type="journal article" date="2019" name="Nat. Ecol. Evol.">
        <title>Palaeoproteomics resolves sloth relationships.</title>
        <authorList>
            <person name="Presslee S."/>
            <person name="Slater G.J."/>
            <person name="Pujos F."/>
            <person name="Forasiepi A.M."/>
            <person name="Fischer R."/>
            <person name="Molloy K."/>
            <person name="Mackie M."/>
            <person name="Olsen J.V."/>
            <person name="Kramarz A."/>
            <person name="Taglioretti M."/>
            <person name="Scaglia F."/>
            <person name="Lezcano M."/>
            <person name="Lanata J.L."/>
            <person name="Southon J."/>
            <person name="Feranec R."/>
            <person name="Bloch J."/>
            <person name="Hajduk A."/>
            <person name="Martin F.M."/>
            <person name="Salas Gismondi R."/>
            <person name="Reguero M."/>
            <person name="de Muizon C."/>
            <person name="Greenwood A."/>
            <person name="Chait B.T."/>
            <person name="Penkman K."/>
            <person name="Collins M."/>
            <person name="MacPhee R.D.E."/>
        </authorList>
    </citation>
    <scope>PROTEIN SEQUENCE</scope>
    <scope>TISSUE SPECIFICITY</scope>
    <scope>IDENTIFICATION BY MASS SPECTROMETRY</scope>
    <source>
        <tissue evidence="4">Bone</tissue>
    </source>
</reference>